<accession>B4ECC6</accession>
<proteinExistence type="inferred from homology"/>
<sequence>MIPGEILTDDGEHELNAGRATRSLVVANTGDRPVQVGSHYHFFEVNDALSFDRAAARGFRLNIAAGTAVRFEPGQTRTVELVALAGERAVYGFQGKVMGPL</sequence>
<comment type="catalytic activity">
    <reaction evidence="1">
        <text>urea + 2 H2O + H(+) = hydrogencarbonate + 2 NH4(+)</text>
        <dbReference type="Rhea" id="RHEA:20557"/>
        <dbReference type="ChEBI" id="CHEBI:15377"/>
        <dbReference type="ChEBI" id="CHEBI:15378"/>
        <dbReference type="ChEBI" id="CHEBI:16199"/>
        <dbReference type="ChEBI" id="CHEBI:17544"/>
        <dbReference type="ChEBI" id="CHEBI:28938"/>
        <dbReference type="EC" id="3.5.1.5"/>
    </reaction>
</comment>
<comment type="pathway">
    <text evidence="1">Nitrogen metabolism; urea degradation; CO(2) and NH(3) from urea (urease route): step 1/1.</text>
</comment>
<comment type="subunit">
    <text evidence="1">Heterotrimer of UreA (gamma), UreB (beta) and UreC (alpha) subunits. Three heterotrimers associate to form the active enzyme.</text>
</comment>
<comment type="subcellular location">
    <subcellularLocation>
        <location evidence="1">Cytoplasm</location>
    </subcellularLocation>
</comment>
<comment type="similarity">
    <text evidence="1">Belongs to the urease beta subunit family.</text>
</comment>
<protein>
    <recommendedName>
        <fullName evidence="1">Urease subunit beta</fullName>
        <ecNumber evidence="1">3.5.1.5</ecNumber>
    </recommendedName>
    <alternativeName>
        <fullName evidence="1">Urea amidohydrolase subunit beta</fullName>
    </alternativeName>
</protein>
<keyword id="KW-0963">Cytoplasm</keyword>
<keyword id="KW-0378">Hydrolase</keyword>
<organism>
    <name type="scientific">Burkholderia cenocepacia (strain ATCC BAA-245 / DSM 16553 / LMG 16656 / NCTC 13227 / J2315 / CF5610)</name>
    <name type="common">Burkholderia cepacia (strain J2315)</name>
    <dbReference type="NCBI Taxonomy" id="216591"/>
    <lineage>
        <taxon>Bacteria</taxon>
        <taxon>Pseudomonadati</taxon>
        <taxon>Pseudomonadota</taxon>
        <taxon>Betaproteobacteria</taxon>
        <taxon>Burkholderiales</taxon>
        <taxon>Burkholderiaceae</taxon>
        <taxon>Burkholderia</taxon>
        <taxon>Burkholderia cepacia complex</taxon>
    </lineage>
</organism>
<dbReference type="EC" id="3.5.1.5" evidence="1"/>
<dbReference type="EMBL" id="AM747720">
    <property type="protein sequence ID" value="CAR53429.1"/>
    <property type="molecule type" value="Genomic_DNA"/>
</dbReference>
<dbReference type="RefSeq" id="WP_006491066.1">
    <property type="nucleotide sequence ID" value="NC_011000.1"/>
</dbReference>
<dbReference type="SMR" id="B4ECC6"/>
<dbReference type="KEGG" id="bcj:BCAL3105"/>
<dbReference type="eggNOG" id="COG0832">
    <property type="taxonomic scope" value="Bacteria"/>
</dbReference>
<dbReference type="HOGENOM" id="CLU_129707_1_1_4"/>
<dbReference type="BioCyc" id="BCEN216591:G1G1V-3445-MONOMER"/>
<dbReference type="UniPathway" id="UPA00258">
    <property type="reaction ID" value="UER00370"/>
</dbReference>
<dbReference type="Proteomes" id="UP000001035">
    <property type="component" value="Chromosome 1"/>
</dbReference>
<dbReference type="GO" id="GO:0035550">
    <property type="term" value="C:urease complex"/>
    <property type="evidence" value="ECO:0007669"/>
    <property type="project" value="InterPro"/>
</dbReference>
<dbReference type="GO" id="GO:0009039">
    <property type="term" value="F:urease activity"/>
    <property type="evidence" value="ECO:0007669"/>
    <property type="project" value="UniProtKB-UniRule"/>
</dbReference>
<dbReference type="GO" id="GO:0043419">
    <property type="term" value="P:urea catabolic process"/>
    <property type="evidence" value="ECO:0007669"/>
    <property type="project" value="UniProtKB-UniRule"/>
</dbReference>
<dbReference type="CDD" id="cd00407">
    <property type="entry name" value="Urease_beta"/>
    <property type="match status" value="1"/>
</dbReference>
<dbReference type="FunFam" id="2.10.150.10:FF:000001">
    <property type="entry name" value="Urease subunit beta"/>
    <property type="match status" value="1"/>
</dbReference>
<dbReference type="Gene3D" id="2.10.150.10">
    <property type="entry name" value="Urease, beta subunit"/>
    <property type="match status" value="1"/>
</dbReference>
<dbReference type="HAMAP" id="MF_01954">
    <property type="entry name" value="Urease_beta"/>
    <property type="match status" value="1"/>
</dbReference>
<dbReference type="InterPro" id="IPR002019">
    <property type="entry name" value="Urease_beta-like"/>
</dbReference>
<dbReference type="InterPro" id="IPR036461">
    <property type="entry name" value="Urease_betasu_sf"/>
</dbReference>
<dbReference type="InterPro" id="IPR050069">
    <property type="entry name" value="Urease_subunit"/>
</dbReference>
<dbReference type="NCBIfam" id="NF009682">
    <property type="entry name" value="PRK13203.1"/>
    <property type="match status" value="1"/>
</dbReference>
<dbReference type="NCBIfam" id="TIGR00192">
    <property type="entry name" value="urease_beta"/>
    <property type="match status" value="1"/>
</dbReference>
<dbReference type="PANTHER" id="PTHR33569">
    <property type="entry name" value="UREASE"/>
    <property type="match status" value="1"/>
</dbReference>
<dbReference type="PANTHER" id="PTHR33569:SF1">
    <property type="entry name" value="UREASE"/>
    <property type="match status" value="1"/>
</dbReference>
<dbReference type="Pfam" id="PF00699">
    <property type="entry name" value="Urease_beta"/>
    <property type="match status" value="1"/>
</dbReference>
<dbReference type="SUPFAM" id="SSF51278">
    <property type="entry name" value="Urease, beta-subunit"/>
    <property type="match status" value="1"/>
</dbReference>
<feature type="chain" id="PRO_1000188915" description="Urease subunit beta">
    <location>
        <begin position="1"/>
        <end position="101"/>
    </location>
</feature>
<name>URE2_BURCJ</name>
<reference key="1">
    <citation type="journal article" date="2009" name="J. Bacteriol.">
        <title>The genome of Burkholderia cenocepacia J2315, an epidemic pathogen of cystic fibrosis patients.</title>
        <authorList>
            <person name="Holden M.T."/>
            <person name="Seth-Smith H.M."/>
            <person name="Crossman L.C."/>
            <person name="Sebaihia M."/>
            <person name="Bentley S.D."/>
            <person name="Cerdeno-Tarraga A.M."/>
            <person name="Thomson N.R."/>
            <person name="Bason N."/>
            <person name="Quail M.A."/>
            <person name="Sharp S."/>
            <person name="Cherevach I."/>
            <person name="Churcher C."/>
            <person name="Goodhead I."/>
            <person name="Hauser H."/>
            <person name="Holroyd N."/>
            <person name="Mungall K."/>
            <person name="Scott P."/>
            <person name="Walker D."/>
            <person name="White B."/>
            <person name="Rose H."/>
            <person name="Iversen P."/>
            <person name="Mil-Homens D."/>
            <person name="Rocha E.P."/>
            <person name="Fialho A.M."/>
            <person name="Baldwin A."/>
            <person name="Dowson C."/>
            <person name="Barrell B.G."/>
            <person name="Govan J.R."/>
            <person name="Vandamme P."/>
            <person name="Hart C.A."/>
            <person name="Mahenthiralingam E."/>
            <person name="Parkhill J."/>
        </authorList>
    </citation>
    <scope>NUCLEOTIDE SEQUENCE [LARGE SCALE GENOMIC DNA]</scope>
    <source>
        <strain>ATCC BAA-245 / DSM 16553 / LMG 16656 / NCTC 13227 / J2315 / CF5610</strain>
    </source>
</reference>
<gene>
    <name evidence="1" type="primary">ureB</name>
    <name type="ordered locus">BceJ2315_30520</name>
    <name type="ORF">BCAL3105</name>
</gene>
<evidence type="ECO:0000255" key="1">
    <source>
        <dbReference type="HAMAP-Rule" id="MF_01954"/>
    </source>
</evidence>